<reference key="1">
    <citation type="journal article" date="2004" name="Nat. Genet.">
        <title>Complete sequencing and characterization of 21,243 full-length human cDNAs.</title>
        <authorList>
            <person name="Ota T."/>
            <person name="Suzuki Y."/>
            <person name="Nishikawa T."/>
            <person name="Otsuki T."/>
            <person name="Sugiyama T."/>
            <person name="Irie R."/>
            <person name="Wakamatsu A."/>
            <person name="Hayashi K."/>
            <person name="Sato H."/>
            <person name="Nagai K."/>
            <person name="Kimura K."/>
            <person name="Makita H."/>
            <person name="Sekine M."/>
            <person name="Obayashi M."/>
            <person name="Nishi T."/>
            <person name="Shibahara T."/>
            <person name="Tanaka T."/>
            <person name="Ishii S."/>
            <person name="Yamamoto J."/>
            <person name="Saito K."/>
            <person name="Kawai Y."/>
            <person name="Isono Y."/>
            <person name="Nakamura Y."/>
            <person name="Nagahari K."/>
            <person name="Murakami K."/>
            <person name="Yasuda T."/>
            <person name="Iwayanagi T."/>
            <person name="Wagatsuma M."/>
            <person name="Shiratori A."/>
            <person name="Sudo H."/>
            <person name="Hosoiri T."/>
            <person name="Kaku Y."/>
            <person name="Kodaira H."/>
            <person name="Kondo H."/>
            <person name="Sugawara M."/>
            <person name="Takahashi M."/>
            <person name="Kanda K."/>
            <person name="Yokoi T."/>
            <person name="Furuya T."/>
            <person name="Kikkawa E."/>
            <person name="Omura Y."/>
            <person name="Abe K."/>
            <person name="Kamihara K."/>
            <person name="Katsuta N."/>
            <person name="Sato K."/>
            <person name="Tanikawa M."/>
            <person name="Yamazaki M."/>
            <person name="Ninomiya K."/>
            <person name="Ishibashi T."/>
            <person name="Yamashita H."/>
            <person name="Murakawa K."/>
            <person name="Fujimori K."/>
            <person name="Tanai H."/>
            <person name="Kimata M."/>
            <person name="Watanabe M."/>
            <person name="Hiraoka S."/>
            <person name="Chiba Y."/>
            <person name="Ishida S."/>
            <person name="Ono Y."/>
            <person name="Takiguchi S."/>
            <person name="Watanabe S."/>
            <person name="Yosida M."/>
            <person name="Hotuta T."/>
            <person name="Kusano J."/>
            <person name="Kanehori K."/>
            <person name="Takahashi-Fujii A."/>
            <person name="Hara H."/>
            <person name="Tanase T.-O."/>
            <person name="Nomura Y."/>
            <person name="Togiya S."/>
            <person name="Komai F."/>
            <person name="Hara R."/>
            <person name="Takeuchi K."/>
            <person name="Arita M."/>
            <person name="Imose N."/>
            <person name="Musashino K."/>
            <person name="Yuuki H."/>
            <person name="Oshima A."/>
            <person name="Sasaki N."/>
            <person name="Aotsuka S."/>
            <person name="Yoshikawa Y."/>
            <person name="Matsunawa H."/>
            <person name="Ichihara T."/>
            <person name="Shiohata N."/>
            <person name="Sano S."/>
            <person name="Moriya S."/>
            <person name="Momiyama H."/>
            <person name="Satoh N."/>
            <person name="Takami S."/>
            <person name="Terashima Y."/>
            <person name="Suzuki O."/>
            <person name="Nakagawa S."/>
            <person name="Senoh A."/>
            <person name="Mizoguchi H."/>
            <person name="Goto Y."/>
            <person name="Shimizu F."/>
            <person name="Wakebe H."/>
            <person name="Hishigaki H."/>
            <person name="Watanabe T."/>
            <person name="Sugiyama A."/>
            <person name="Takemoto M."/>
            <person name="Kawakami B."/>
            <person name="Yamazaki M."/>
            <person name="Watanabe K."/>
            <person name="Kumagai A."/>
            <person name="Itakura S."/>
            <person name="Fukuzumi Y."/>
            <person name="Fujimori Y."/>
            <person name="Komiyama M."/>
            <person name="Tashiro H."/>
            <person name="Tanigami A."/>
            <person name="Fujiwara T."/>
            <person name="Ono T."/>
            <person name="Yamada K."/>
            <person name="Fujii Y."/>
            <person name="Ozaki K."/>
            <person name="Hirao M."/>
            <person name="Ohmori Y."/>
            <person name="Kawabata A."/>
            <person name="Hikiji T."/>
            <person name="Kobatake N."/>
            <person name="Inagaki H."/>
            <person name="Ikema Y."/>
            <person name="Okamoto S."/>
            <person name="Okitani R."/>
            <person name="Kawakami T."/>
            <person name="Noguchi S."/>
            <person name="Itoh T."/>
            <person name="Shigeta K."/>
            <person name="Senba T."/>
            <person name="Matsumura K."/>
            <person name="Nakajima Y."/>
            <person name="Mizuno T."/>
            <person name="Morinaga M."/>
            <person name="Sasaki M."/>
            <person name="Togashi T."/>
            <person name="Oyama M."/>
            <person name="Hata H."/>
            <person name="Watanabe M."/>
            <person name="Komatsu T."/>
            <person name="Mizushima-Sugano J."/>
            <person name="Satoh T."/>
            <person name="Shirai Y."/>
            <person name="Takahashi Y."/>
            <person name="Nakagawa K."/>
            <person name="Okumura K."/>
            <person name="Nagase T."/>
            <person name="Nomura N."/>
            <person name="Kikuchi H."/>
            <person name="Masuho Y."/>
            <person name="Yamashita R."/>
            <person name="Nakai K."/>
            <person name="Yada T."/>
            <person name="Nakamura Y."/>
            <person name="Ohara O."/>
            <person name="Isogai T."/>
            <person name="Sugano S."/>
        </authorList>
    </citation>
    <scope>NUCLEOTIDE SEQUENCE [LARGE SCALE MRNA] (ISOFORM 2)</scope>
</reference>
<reference key="2">
    <citation type="journal article" date="2004" name="Nature">
        <title>The DNA sequence and analysis of human chromosome 13.</title>
        <authorList>
            <person name="Dunham A."/>
            <person name="Matthews L.H."/>
            <person name="Burton J."/>
            <person name="Ashurst J.L."/>
            <person name="Howe K.L."/>
            <person name="Ashcroft K.J."/>
            <person name="Beare D.M."/>
            <person name="Burford D.C."/>
            <person name="Hunt S.E."/>
            <person name="Griffiths-Jones S."/>
            <person name="Jones M.C."/>
            <person name="Keenan S.J."/>
            <person name="Oliver K."/>
            <person name="Scott C.E."/>
            <person name="Ainscough R."/>
            <person name="Almeida J.P."/>
            <person name="Ambrose K.D."/>
            <person name="Andrews D.T."/>
            <person name="Ashwell R.I.S."/>
            <person name="Babbage A.K."/>
            <person name="Bagguley C.L."/>
            <person name="Bailey J."/>
            <person name="Bannerjee R."/>
            <person name="Barlow K.F."/>
            <person name="Bates K."/>
            <person name="Beasley H."/>
            <person name="Bird C.P."/>
            <person name="Bray-Allen S."/>
            <person name="Brown A.J."/>
            <person name="Brown J.Y."/>
            <person name="Burrill W."/>
            <person name="Carder C."/>
            <person name="Carter N.P."/>
            <person name="Chapman J.C."/>
            <person name="Clamp M.E."/>
            <person name="Clark S.Y."/>
            <person name="Clarke G."/>
            <person name="Clee C.M."/>
            <person name="Clegg S.C."/>
            <person name="Cobley V."/>
            <person name="Collins J.E."/>
            <person name="Corby N."/>
            <person name="Coville G.J."/>
            <person name="Deloukas P."/>
            <person name="Dhami P."/>
            <person name="Dunham I."/>
            <person name="Dunn M."/>
            <person name="Earthrowl M.E."/>
            <person name="Ellington A.G."/>
            <person name="Faulkner L."/>
            <person name="Frankish A.G."/>
            <person name="Frankland J."/>
            <person name="French L."/>
            <person name="Garner P."/>
            <person name="Garnett J."/>
            <person name="Gilbert J.G.R."/>
            <person name="Gilson C.J."/>
            <person name="Ghori J."/>
            <person name="Grafham D.V."/>
            <person name="Gribble S.M."/>
            <person name="Griffiths C."/>
            <person name="Hall R.E."/>
            <person name="Hammond S."/>
            <person name="Harley J.L."/>
            <person name="Hart E.A."/>
            <person name="Heath P.D."/>
            <person name="Howden P.J."/>
            <person name="Huckle E.J."/>
            <person name="Hunt P.J."/>
            <person name="Hunt A.R."/>
            <person name="Johnson C."/>
            <person name="Johnson D."/>
            <person name="Kay M."/>
            <person name="Kimberley A.M."/>
            <person name="King A."/>
            <person name="Laird G.K."/>
            <person name="Langford C.J."/>
            <person name="Lawlor S."/>
            <person name="Leongamornlert D.A."/>
            <person name="Lloyd D.M."/>
            <person name="Lloyd C."/>
            <person name="Loveland J.E."/>
            <person name="Lovell J."/>
            <person name="Martin S."/>
            <person name="Mashreghi-Mohammadi M."/>
            <person name="McLaren S.J."/>
            <person name="McMurray A."/>
            <person name="Milne S."/>
            <person name="Moore M.J.F."/>
            <person name="Nickerson T."/>
            <person name="Palmer S.A."/>
            <person name="Pearce A.V."/>
            <person name="Peck A.I."/>
            <person name="Pelan S."/>
            <person name="Phillimore B."/>
            <person name="Porter K.M."/>
            <person name="Rice C.M."/>
            <person name="Searle S."/>
            <person name="Sehra H.K."/>
            <person name="Shownkeen R."/>
            <person name="Skuce C.D."/>
            <person name="Smith M."/>
            <person name="Steward C.A."/>
            <person name="Sycamore N."/>
            <person name="Tester J."/>
            <person name="Thomas D.W."/>
            <person name="Tracey A."/>
            <person name="Tromans A."/>
            <person name="Tubby B."/>
            <person name="Wall M."/>
            <person name="Wallis J.M."/>
            <person name="West A.P."/>
            <person name="Whitehead S.L."/>
            <person name="Willey D.L."/>
            <person name="Wilming L."/>
            <person name="Wray P.W."/>
            <person name="Wright M.W."/>
            <person name="Young L."/>
            <person name="Coulson A."/>
            <person name="Durbin R.M."/>
            <person name="Hubbard T."/>
            <person name="Sulston J.E."/>
            <person name="Beck S."/>
            <person name="Bentley D.R."/>
            <person name="Rogers J."/>
            <person name="Ross M.T."/>
        </authorList>
    </citation>
    <scope>NUCLEOTIDE SEQUENCE [LARGE SCALE GENOMIC DNA]</scope>
</reference>
<sequence length="187" mass="21340">MPGGLEKTCHQCISKIASNACFVVVLCAFLALPLSMTFIGMKFLEDCPIQPLIPLYLLVGGIVGTLKVSLLLYDSTRMRRLLSKAVVIDDDDDDEYPWRQNAHRYYIHLLLSLFLFLWFILGNYWVFSVYLPDFLPPFQQPQDYCDKTLYLFAVGVLALSHTVLVLLLLCSGCVYLCSRWRLAADED</sequence>
<gene>
    <name evidence="3" type="primary">TMEM272</name>
</gene>
<comment type="subcellular location">
    <subcellularLocation>
        <location evidence="1">Membrane</location>
        <topology evidence="1">Multi-pass membrane protein</topology>
    </subcellularLocation>
</comment>
<comment type="alternative products">
    <event type="alternative splicing"/>
    <isoform>
        <id>A0A1B0GTI8-1</id>
        <name>1</name>
        <sequence type="displayed"/>
    </isoform>
    <isoform>
        <id>A0A1B0GTI8-2</id>
        <name>2</name>
        <sequence type="described" ref="VSP_060221"/>
    </isoform>
</comment>
<accession>A0A1B0GTI8</accession>
<accession>A0A1B0GW01</accession>
<proteinExistence type="evidence at transcript level"/>
<name>TM272_HUMAN</name>
<dbReference type="EMBL" id="AK124707">
    <property type="status" value="NOT_ANNOTATED_CDS"/>
    <property type="molecule type" value="mRNA"/>
</dbReference>
<dbReference type="EMBL" id="AL162377">
    <property type="status" value="NOT_ANNOTATED_CDS"/>
    <property type="molecule type" value="Genomic_DNA"/>
</dbReference>
<dbReference type="CCDS" id="CCDS86353.1">
    <molecule id="A0A1B0GTI8-1"/>
</dbReference>
<dbReference type="RefSeq" id="NP_001337932.1">
    <molecule id="A0A1B0GTI8-1"/>
    <property type="nucleotide sequence ID" value="NM_001351003.2"/>
</dbReference>
<dbReference type="RefSeq" id="NP_001337935.1">
    <molecule id="A0A1B0GTI8-2"/>
    <property type="nucleotide sequence ID" value="NM_001351006.2"/>
</dbReference>
<dbReference type="RefSeq" id="XP_047286235.1">
    <molecule id="A0A1B0GTI8-1"/>
    <property type="nucleotide sequence ID" value="XM_047430279.1"/>
</dbReference>
<dbReference type="RefSeq" id="XP_047286236.1">
    <molecule id="A0A1B0GTI8-1"/>
    <property type="nucleotide sequence ID" value="XM_047430280.1"/>
</dbReference>
<dbReference type="RefSeq" id="XP_054230448.1">
    <molecule id="A0A1B0GTI8-1"/>
    <property type="nucleotide sequence ID" value="XM_054374473.1"/>
</dbReference>
<dbReference type="RefSeq" id="XP_054230449.1">
    <molecule id="A0A1B0GTI8-1"/>
    <property type="nucleotide sequence ID" value="XM_054374474.1"/>
</dbReference>
<dbReference type="FunCoup" id="A0A1B0GTI8">
    <property type="interactions" value="4"/>
</dbReference>
<dbReference type="STRING" id="9606.ENSP00000490718"/>
<dbReference type="BioMuta" id="TMEM272"/>
<dbReference type="PeptideAtlas" id="A0A1B0GTI8"/>
<dbReference type="Ensembl" id="ENST00000629372.3">
    <molecule id="A0A1B0GTI8-1"/>
    <property type="protein sequence ID" value="ENSP00000490718.2"/>
    <property type="gene ID" value="ENSG00000281106.4"/>
</dbReference>
<dbReference type="GeneID" id="283521"/>
<dbReference type="MANE-Select" id="ENST00000629372.3">
    <property type="protein sequence ID" value="ENSP00000490718.2"/>
    <property type="RefSeq nucleotide sequence ID" value="NM_001351003.2"/>
    <property type="RefSeq protein sequence ID" value="NP_001337932.1"/>
</dbReference>
<dbReference type="AGR" id="HGNC:26737"/>
<dbReference type="GeneCards" id="TMEM272"/>
<dbReference type="HGNC" id="HGNC:26737">
    <property type="gene designation" value="TMEM272"/>
</dbReference>
<dbReference type="HPA" id="ENSG00000281106">
    <property type="expression patterns" value="Tissue enriched (brain)"/>
</dbReference>
<dbReference type="neXtProt" id="NX_A0A1B0GTI8"/>
<dbReference type="OpenTargets" id="ENSG00000281106"/>
<dbReference type="VEuPathDB" id="HostDB:ENSG00000281106"/>
<dbReference type="GeneTree" id="ENSGT01120000271941"/>
<dbReference type="InParanoid" id="A0A1B0GTI8"/>
<dbReference type="OMA" id="NACFIFA"/>
<dbReference type="OrthoDB" id="6157510at2759"/>
<dbReference type="PAN-GO" id="A0A1B0GTI8">
    <property type="GO annotations" value="0 GO annotations based on evolutionary models"/>
</dbReference>
<dbReference type="Pharos" id="A0A1B0GTI8">
    <property type="development level" value="Tdark"/>
</dbReference>
<dbReference type="PRO" id="PR:A0A1B0GTI8"/>
<dbReference type="Proteomes" id="UP000005640">
    <property type="component" value="Chromosome 13"/>
</dbReference>
<dbReference type="RNAct" id="A0A1B0GTI8">
    <property type="molecule type" value="protein"/>
</dbReference>
<dbReference type="Bgee" id="ENSG00000281106">
    <property type="expression patterns" value="Expressed in nucleus accumbens and 66 other cell types or tissues"/>
</dbReference>
<dbReference type="ExpressionAtlas" id="A0A1B0GTI8">
    <property type="expression patterns" value="baseline and differential"/>
</dbReference>
<dbReference type="GO" id="GO:0016020">
    <property type="term" value="C:membrane"/>
    <property type="evidence" value="ECO:0007669"/>
    <property type="project" value="UniProtKB-SubCell"/>
</dbReference>
<dbReference type="InterPro" id="IPR040350">
    <property type="entry name" value="TMEM272"/>
</dbReference>
<dbReference type="PANTHER" id="PTHR33444">
    <property type="entry name" value="SI:DKEY-19B23.12-RELATED"/>
    <property type="match status" value="1"/>
</dbReference>
<dbReference type="PANTHER" id="PTHR33444:SF7">
    <property type="entry name" value="TRANSMEMBRANE PROTEIN 272"/>
    <property type="match status" value="1"/>
</dbReference>
<feature type="chain" id="PRO_0000443499" description="Transmembrane protein 272">
    <location>
        <begin position="1"/>
        <end position="187"/>
    </location>
</feature>
<feature type="transmembrane region" description="Helical" evidence="1">
    <location>
        <begin position="21"/>
        <end position="41"/>
    </location>
</feature>
<feature type="transmembrane region" description="Helical" evidence="1">
    <location>
        <begin position="52"/>
        <end position="72"/>
    </location>
</feature>
<feature type="transmembrane region" description="Helical" evidence="1">
    <location>
        <begin position="107"/>
        <end position="127"/>
    </location>
</feature>
<feature type="transmembrane region" description="Helical" evidence="1">
    <location>
        <begin position="149"/>
        <end position="169"/>
    </location>
</feature>
<feature type="splice variant" id="VSP_060221" description="In isoform 2.">
    <original>MPGGLEKTCHQCISKIASNACFVVVLCAFLALPLSMTFIGMKFLEDCPIQPLIPLYLLVGGIVGTLK</original>
    <variation>M</variation>
    <location>
        <begin position="1"/>
        <end position="67"/>
    </location>
</feature>
<organism>
    <name type="scientific">Homo sapiens</name>
    <name type="common">Human</name>
    <dbReference type="NCBI Taxonomy" id="9606"/>
    <lineage>
        <taxon>Eukaryota</taxon>
        <taxon>Metazoa</taxon>
        <taxon>Chordata</taxon>
        <taxon>Craniata</taxon>
        <taxon>Vertebrata</taxon>
        <taxon>Euteleostomi</taxon>
        <taxon>Mammalia</taxon>
        <taxon>Eutheria</taxon>
        <taxon>Euarchontoglires</taxon>
        <taxon>Primates</taxon>
        <taxon>Haplorrhini</taxon>
        <taxon>Catarrhini</taxon>
        <taxon>Hominidae</taxon>
        <taxon>Homo</taxon>
    </lineage>
</organism>
<evidence type="ECO:0000255" key="1"/>
<evidence type="ECO:0000305" key="2"/>
<evidence type="ECO:0000312" key="3">
    <source>
        <dbReference type="HGNC" id="HGNC:26737"/>
    </source>
</evidence>
<protein>
    <recommendedName>
        <fullName evidence="2">Transmembrane protein 272</fullName>
    </recommendedName>
</protein>
<keyword id="KW-0025">Alternative splicing</keyword>
<keyword id="KW-0472">Membrane</keyword>
<keyword id="KW-1185">Reference proteome</keyword>
<keyword id="KW-0812">Transmembrane</keyword>
<keyword id="KW-1133">Transmembrane helix</keyword>